<proteinExistence type="inferred from homology"/>
<comment type="function">
    <text evidence="1">Involved in the biosynthesis of branched-chain amino acids (BCAA). Catalyzes an alkyl-migration followed by a ketol-acid reduction of (S)-2-acetolactate (S2AL) to yield (R)-2,3-dihydroxy-isovalerate. In the isomerase reaction, S2AL is rearranged via a Mg-dependent methyl migration to produce 3-hydroxy-3-methyl-2-ketobutyrate (HMKB). In the reductase reaction, this 2-ketoacid undergoes a metal-dependent reduction by NADPH to yield (R)-2,3-dihydroxy-isovalerate.</text>
</comment>
<comment type="catalytic activity">
    <reaction evidence="1">
        <text>(2R)-2,3-dihydroxy-3-methylbutanoate + NADP(+) = (2S)-2-acetolactate + NADPH + H(+)</text>
        <dbReference type="Rhea" id="RHEA:22068"/>
        <dbReference type="ChEBI" id="CHEBI:15378"/>
        <dbReference type="ChEBI" id="CHEBI:49072"/>
        <dbReference type="ChEBI" id="CHEBI:57783"/>
        <dbReference type="ChEBI" id="CHEBI:58349"/>
        <dbReference type="ChEBI" id="CHEBI:58476"/>
        <dbReference type="EC" id="1.1.1.86"/>
    </reaction>
</comment>
<comment type="catalytic activity">
    <reaction evidence="1">
        <text>(2R,3R)-2,3-dihydroxy-3-methylpentanoate + NADP(+) = (S)-2-ethyl-2-hydroxy-3-oxobutanoate + NADPH + H(+)</text>
        <dbReference type="Rhea" id="RHEA:13493"/>
        <dbReference type="ChEBI" id="CHEBI:15378"/>
        <dbReference type="ChEBI" id="CHEBI:49256"/>
        <dbReference type="ChEBI" id="CHEBI:49258"/>
        <dbReference type="ChEBI" id="CHEBI:57783"/>
        <dbReference type="ChEBI" id="CHEBI:58349"/>
        <dbReference type="EC" id="1.1.1.86"/>
    </reaction>
</comment>
<comment type="cofactor">
    <cofactor evidence="1">
        <name>Mg(2+)</name>
        <dbReference type="ChEBI" id="CHEBI:18420"/>
    </cofactor>
    <text evidence="1">Binds 2 magnesium ions per subunit.</text>
</comment>
<comment type="pathway">
    <text evidence="1">Amino-acid biosynthesis; L-isoleucine biosynthesis; L-isoleucine from 2-oxobutanoate: step 2/4.</text>
</comment>
<comment type="pathway">
    <text evidence="1">Amino-acid biosynthesis; L-valine biosynthesis; L-valine from pyruvate: step 2/4.</text>
</comment>
<comment type="similarity">
    <text evidence="1">Belongs to the ketol-acid reductoisomerase family.</text>
</comment>
<evidence type="ECO:0000255" key="1">
    <source>
        <dbReference type="HAMAP-Rule" id="MF_00435"/>
    </source>
</evidence>
<evidence type="ECO:0000255" key="2">
    <source>
        <dbReference type="PROSITE-ProRule" id="PRU01197"/>
    </source>
</evidence>
<evidence type="ECO:0000255" key="3">
    <source>
        <dbReference type="PROSITE-ProRule" id="PRU01198"/>
    </source>
</evidence>
<keyword id="KW-0028">Amino-acid biosynthesis</keyword>
<keyword id="KW-0100">Branched-chain amino acid biosynthesis</keyword>
<keyword id="KW-0460">Magnesium</keyword>
<keyword id="KW-0479">Metal-binding</keyword>
<keyword id="KW-0521">NADP</keyword>
<keyword id="KW-0560">Oxidoreductase</keyword>
<dbReference type="EC" id="1.1.1.86" evidence="1"/>
<dbReference type="EMBL" id="CP000916">
    <property type="protein sequence ID" value="ACM22294.1"/>
    <property type="molecule type" value="Genomic_DNA"/>
</dbReference>
<dbReference type="RefSeq" id="WP_012645004.1">
    <property type="nucleotide sequence ID" value="NC_011978.1"/>
</dbReference>
<dbReference type="SMR" id="B9KB98"/>
<dbReference type="STRING" id="309803.CTN_0118"/>
<dbReference type="KEGG" id="tna:CTN_0118"/>
<dbReference type="eggNOG" id="COG0059">
    <property type="taxonomic scope" value="Bacteria"/>
</dbReference>
<dbReference type="HOGENOM" id="CLU_033821_0_1_0"/>
<dbReference type="UniPathway" id="UPA00047">
    <property type="reaction ID" value="UER00056"/>
</dbReference>
<dbReference type="UniPathway" id="UPA00049">
    <property type="reaction ID" value="UER00060"/>
</dbReference>
<dbReference type="Proteomes" id="UP000000445">
    <property type="component" value="Chromosome"/>
</dbReference>
<dbReference type="GO" id="GO:0005829">
    <property type="term" value="C:cytosol"/>
    <property type="evidence" value="ECO:0007669"/>
    <property type="project" value="TreeGrafter"/>
</dbReference>
<dbReference type="GO" id="GO:0004455">
    <property type="term" value="F:ketol-acid reductoisomerase activity"/>
    <property type="evidence" value="ECO:0007669"/>
    <property type="project" value="UniProtKB-UniRule"/>
</dbReference>
<dbReference type="GO" id="GO:0000287">
    <property type="term" value="F:magnesium ion binding"/>
    <property type="evidence" value="ECO:0007669"/>
    <property type="project" value="UniProtKB-UniRule"/>
</dbReference>
<dbReference type="GO" id="GO:0050661">
    <property type="term" value="F:NADP binding"/>
    <property type="evidence" value="ECO:0007669"/>
    <property type="project" value="InterPro"/>
</dbReference>
<dbReference type="GO" id="GO:0009097">
    <property type="term" value="P:isoleucine biosynthetic process"/>
    <property type="evidence" value="ECO:0007669"/>
    <property type="project" value="UniProtKB-UniRule"/>
</dbReference>
<dbReference type="GO" id="GO:0009099">
    <property type="term" value="P:L-valine biosynthetic process"/>
    <property type="evidence" value="ECO:0007669"/>
    <property type="project" value="UniProtKB-UniRule"/>
</dbReference>
<dbReference type="FunFam" id="3.40.50.720:FF:000023">
    <property type="entry name" value="Ketol-acid reductoisomerase (NADP(+))"/>
    <property type="match status" value="1"/>
</dbReference>
<dbReference type="Gene3D" id="6.10.240.10">
    <property type="match status" value="1"/>
</dbReference>
<dbReference type="Gene3D" id="3.40.50.720">
    <property type="entry name" value="NAD(P)-binding Rossmann-like Domain"/>
    <property type="match status" value="1"/>
</dbReference>
<dbReference type="HAMAP" id="MF_00435">
    <property type="entry name" value="IlvC"/>
    <property type="match status" value="1"/>
</dbReference>
<dbReference type="InterPro" id="IPR008927">
    <property type="entry name" value="6-PGluconate_DH-like_C_sf"/>
</dbReference>
<dbReference type="InterPro" id="IPR013023">
    <property type="entry name" value="KARI"/>
</dbReference>
<dbReference type="InterPro" id="IPR000506">
    <property type="entry name" value="KARI_C"/>
</dbReference>
<dbReference type="InterPro" id="IPR013116">
    <property type="entry name" value="KARI_N"/>
</dbReference>
<dbReference type="InterPro" id="IPR014359">
    <property type="entry name" value="KARI_prok"/>
</dbReference>
<dbReference type="InterPro" id="IPR036291">
    <property type="entry name" value="NAD(P)-bd_dom_sf"/>
</dbReference>
<dbReference type="NCBIfam" id="TIGR00465">
    <property type="entry name" value="ilvC"/>
    <property type="match status" value="1"/>
</dbReference>
<dbReference type="NCBIfam" id="NF004017">
    <property type="entry name" value="PRK05479.1"/>
    <property type="match status" value="1"/>
</dbReference>
<dbReference type="NCBIfam" id="NF009940">
    <property type="entry name" value="PRK13403.1"/>
    <property type="match status" value="1"/>
</dbReference>
<dbReference type="PANTHER" id="PTHR21371">
    <property type="entry name" value="KETOL-ACID REDUCTOISOMERASE, MITOCHONDRIAL"/>
    <property type="match status" value="1"/>
</dbReference>
<dbReference type="PANTHER" id="PTHR21371:SF1">
    <property type="entry name" value="KETOL-ACID REDUCTOISOMERASE, MITOCHONDRIAL"/>
    <property type="match status" value="1"/>
</dbReference>
<dbReference type="Pfam" id="PF01450">
    <property type="entry name" value="KARI_C"/>
    <property type="match status" value="1"/>
</dbReference>
<dbReference type="Pfam" id="PF07991">
    <property type="entry name" value="KARI_N"/>
    <property type="match status" value="1"/>
</dbReference>
<dbReference type="PIRSF" id="PIRSF000116">
    <property type="entry name" value="IlvC_gammaproteo"/>
    <property type="match status" value="1"/>
</dbReference>
<dbReference type="SUPFAM" id="SSF48179">
    <property type="entry name" value="6-phosphogluconate dehydrogenase C-terminal domain-like"/>
    <property type="match status" value="1"/>
</dbReference>
<dbReference type="SUPFAM" id="SSF51735">
    <property type="entry name" value="NAD(P)-binding Rossmann-fold domains"/>
    <property type="match status" value="1"/>
</dbReference>
<dbReference type="PROSITE" id="PS51851">
    <property type="entry name" value="KARI_C"/>
    <property type="match status" value="1"/>
</dbReference>
<dbReference type="PROSITE" id="PS51850">
    <property type="entry name" value="KARI_N"/>
    <property type="match status" value="1"/>
</dbReference>
<accession>B9KB98</accession>
<sequence length="336" mass="38057">MAVIYYDKDANLDLIKDKKIAIIGFGSQGHAHALNLKDSGLNVIVGLREGSKSWKKAEEQGLTVKTIEEAAKEADIIMILIPDEHQPEVYKKYIEKHLTEGKMLMFAHGFNVHYHQIIPPKNVDVTMIAPKSPGHIVRREYVEGRGVPALVAVYQDYTGKAKEIALAYAKGIGVTRAGVIETTFKEETETDLFGEQAVLCGGVTALIKAGFETLVEAGYQPEIAYFECLNELKLIVDLIYEGGLSFMRYSVSNTAEYGDYISQEKIVTREVRENMKQMLKDIQTGKFAKDWILENQAGRPFFYTMRKKESEHLIEKVGKELRKMMPWLKERNVDEE</sequence>
<protein>
    <recommendedName>
        <fullName evidence="1">Ketol-acid reductoisomerase (NADP(+))</fullName>
        <shortName evidence="1">KARI</shortName>
        <ecNumber evidence="1">1.1.1.86</ecNumber>
    </recommendedName>
    <alternativeName>
        <fullName evidence="1">Acetohydroxy-acid isomeroreductase</fullName>
        <shortName evidence="1">AHIR</shortName>
    </alternativeName>
    <alternativeName>
        <fullName evidence="1">Alpha-keto-beta-hydroxylacyl reductoisomerase</fullName>
    </alternativeName>
    <alternativeName>
        <fullName evidence="1">Ketol-acid reductoisomerase type 1</fullName>
    </alternativeName>
    <alternativeName>
        <fullName evidence="1">Ketol-acid reductoisomerase type I</fullName>
    </alternativeName>
</protein>
<reference key="1">
    <citation type="submission" date="2007-11" db="EMBL/GenBank/DDBJ databases">
        <title>The genome sequence of the hyperthermophilic bacterium Thermotoga neapolitana.</title>
        <authorList>
            <person name="Lim S.K."/>
            <person name="Kim J.S."/>
            <person name="Cha S.H."/>
            <person name="Park B.C."/>
            <person name="Lee D.S."/>
            <person name="Tae H.S."/>
            <person name="Kim S.-J."/>
            <person name="Kim J.J."/>
            <person name="Park K.J."/>
            <person name="Lee S.Y."/>
        </authorList>
    </citation>
    <scope>NUCLEOTIDE SEQUENCE [LARGE SCALE GENOMIC DNA]</scope>
    <source>
        <strain>ATCC 49049 / DSM 4359 / NBRC 107923 / NS-E</strain>
    </source>
</reference>
<feature type="chain" id="PRO_1000191011" description="Ketol-acid reductoisomerase (NADP(+))">
    <location>
        <begin position="1"/>
        <end position="336"/>
    </location>
</feature>
<feature type="domain" description="KARI N-terminal Rossmann" evidence="2">
    <location>
        <begin position="1"/>
        <end position="182"/>
    </location>
</feature>
<feature type="domain" description="KARI C-terminal knotted" evidence="3">
    <location>
        <begin position="183"/>
        <end position="328"/>
    </location>
</feature>
<feature type="active site" evidence="1">
    <location>
        <position position="108"/>
    </location>
</feature>
<feature type="binding site" evidence="1">
    <location>
        <begin position="25"/>
        <end position="28"/>
    </location>
    <ligand>
        <name>NADP(+)</name>
        <dbReference type="ChEBI" id="CHEBI:58349"/>
    </ligand>
</feature>
<feature type="binding site" evidence="1">
    <location>
        <position position="48"/>
    </location>
    <ligand>
        <name>NADP(+)</name>
        <dbReference type="ChEBI" id="CHEBI:58349"/>
    </ligand>
</feature>
<feature type="binding site" evidence="1">
    <location>
        <position position="51"/>
    </location>
    <ligand>
        <name>NADP(+)</name>
        <dbReference type="ChEBI" id="CHEBI:58349"/>
    </ligand>
</feature>
<feature type="binding site" evidence="1">
    <location>
        <position position="53"/>
    </location>
    <ligand>
        <name>NADP(+)</name>
        <dbReference type="ChEBI" id="CHEBI:58349"/>
    </ligand>
</feature>
<feature type="binding site" evidence="1">
    <location>
        <begin position="83"/>
        <end position="86"/>
    </location>
    <ligand>
        <name>NADP(+)</name>
        <dbReference type="ChEBI" id="CHEBI:58349"/>
    </ligand>
</feature>
<feature type="binding site" evidence="1">
    <location>
        <position position="134"/>
    </location>
    <ligand>
        <name>NADP(+)</name>
        <dbReference type="ChEBI" id="CHEBI:58349"/>
    </ligand>
</feature>
<feature type="binding site" evidence="1">
    <location>
        <position position="191"/>
    </location>
    <ligand>
        <name>Mg(2+)</name>
        <dbReference type="ChEBI" id="CHEBI:18420"/>
        <label>1</label>
    </ligand>
</feature>
<feature type="binding site" evidence="1">
    <location>
        <position position="191"/>
    </location>
    <ligand>
        <name>Mg(2+)</name>
        <dbReference type="ChEBI" id="CHEBI:18420"/>
        <label>2</label>
    </ligand>
</feature>
<feature type="binding site" evidence="1">
    <location>
        <position position="195"/>
    </location>
    <ligand>
        <name>Mg(2+)</name>
        <dbReference type="ChEBI" id="CHEBI:18420"/>
        <label>1</label>
    </ligand>
</feature>
<feature type="binding site" evidence="1">
    <location>
        <position position="227"/>
    </location>
    <ligand>
        <name>Mg(2+)</name>
        <dbReference type="ChEBI" id="CHEBI:18420"/>
        <label>2</label>
    </ligand>
</feature>
<feature type="binding site" evidence="1">
    <location>
        <position position="231"/>
    </location>
    <ligand>
        <name>Mg(2+)</name>
        <dbReference type="ChEBI" id="CHEBI:18420"/>
        <label>2</label>
    </ligand>
</feature>
<feature type="binding site" evidence="1">
    <location>
        <position position="252"/>
    </location>
    <ligand>
        <name>substrate</name>
    </ligand>
</feature>
<name>ILVC_THENN</name>
<organism>
    <name type="scientific">Thermotoga neapolitana (strain ATCC 49049 / DSM 4359 / NBRC 107923 / NS-E)</name>
    <dbReference type="NCBI Taxonomy" id="309803"/>
    <lineage>
        <taxon>Bacteria</taxon>
        <taxon>Thermotogati</taxon>
        <taxon>Thermotogota</taxon>
        <taxon>Thermotogae</taxon>
        <taxon>Thermotogales</taxon>
        <taxon>Thermotogaceae</taxon>
        <taxon>Thermotoga</taxon>
    </lineage>
</organism>
<gene>
    <name evidence="1" type="primary">ilvC</name>
    <name type="ordered locus">CTN_0118</name>
</gene>